<proteinExistence type="inferred from homology"/>
<keyword id="KW-0560">Oxidoreductase</keyword>
<keyword id="KW-0614">Plasmid</keyword>
<keyword id="KW-1185">Reference proteome</keyword>
<dbReference type="EC" id="1.-.-.-"/>
<dbReference type="EMBL" id="U00090">
    <property type="protein sequence ID" value="AAB91779.1"/>
    <property type="molecule type" value="Genomic_DNA"/>
</dbReference>
<dbReference type="RefSeq" id="NP_443982.1">
    <property type="nucleotide sequence ID" value="NC_000914.2"/>
</dbReference>
<dbReference type="RefSeq" id="WP_010875268.1">
    <property type="nucleotide sequence ID" value="NC_000914.2"/>
</dbReference>
<dbReference type="SMR" id="P55575"/>
<dbReference type="KEGG" id="rhi:NGR_a02430"/>
<dbReference type="PATRIC" id="fig|394.7.peg.253"/>
<dbReference type="eggNOG" id="COG1028">
    <property type="taxonomic scope" value="Bacteria"/>
</dbReference>
<dbReference type="HOGENOM" id="CLU_010194_1_3_5"/>
<dbReference type="OrthoDB" id="8419486at2"/>
<dbReference type="Proteomes" id="UP000001054">
    <property type="component" value="Plasmid pNGR234a"/>
</dbReference>
<dbReference type="GO" id="GO:0016616">
    <property type="term" value="F:oxidoreductase activity, acting on the CH-OH group of donors, NAD or NADP as acceptor"/>
    <property type="evidence" value="ECO:0007669"/>
    <property type="project" value="TreeGrafter"/>
</dbReference>
<dbReference type="GO" id="GO:0030497">
    <property type="term" value="P:fatty acid elongation"/>
    <property type="evidence" value="ECO:0007669"/>
    <property type="project" value="TreeGrafter"/>
</dbReference>
<dbReference type="FunFam" id="3.40.50.720:FF:000084">
    <property type="entry name" value="Short-chain dehydrogenase reductase"/>
    <property type="match status" value="1"/>
</dbReference>
<dbReference type="Gene3D" id="3.40.50.720">
    <property type="entry name" value="NAD(P)-binding Rossmann-like Domain"/>
    <property type="match status" value="1"/>
</dbReference>
<dbReference type="InterPro" id="IPR036291">
    <property type="entry name" value="NAD(P)-bd_dom_sf"/>
</dbReference>
<dbReference type="InterPro" id="IPR020904">
    <property type="entry name" value="Sc_DH/Rdtase_CS"/>
</dbReference>
<dbReference type="InterPro" id="IPR002347">
    <property type="entry name" value="SDR_fam"/>
</dbReference>
<dbReference type="NCBIfam" id="NF005559">
    <property type="entry name" value="PRK07231.1"/>
    <property type="match status" value="1"/>
</dbReference>
<dbReference type="PANTHER" id="PTHR42760:SF135">
    <property type="entry name" value="BLL7886 PROTEIN"/>
    <property type="match status" value="1"/>
</dbReference>
<dbReference type="PANTHER" id="PTHR42760">
    <property type="entry name" value="SHORT-CHAIN DEHYDROGENASES/REDUCTASES FAMILY MEMBER"/>
    <property type="match status" value="1"/>
</dbReference>
<dbReference type="Pfam" id="PF13561">
    <property type="entry name" value="adh_short_C2"/>
    <property type="match status" value="1"/>
</dbReference>
<dbReference type="PRINTS" id="PR00081">
    <property type="entry name" value="GDHRDH"/>
</dbReference>
<dbReference type="PRINTS" id="PR00080">
    <property type="entry name" value="SDRFAMILY"/>
</dbReference>
<dbReference type="SUPFAM" id="SSF51735">
    <property type="entry name" value="NAD(P)-binding Rossmann-fold domains"/>
    <property type="match status" value="1"/>
</dbReference>
<dbReference type="PROSITE" id="PS00061">
    <property type="entry name" value="ADH_SHORT"/>
    <property type="match status" value="1"/>
</dbReference>
<name>Y4MP_SINFN</name>
<geneLocation type="plasmid">
    <name>sym pNGR234a</name>
</geneLocation>
<accession>P55575</accession>
<reference key="1">
    <citation type="journal article" date="1997" name="Nature">
        <title>Molecular basis of symbiosis between Rhizobium and legumes.</title>
        <authorList>
            <person name="Freiberg C.A."/>
            <person name="Fellay R."/>
            <person name="Bairoch A."/>
            <person name="Broughton W.J."/>
            <person name="Rosenthal A."/>
            <person name="Perret X."/>
        </authorList>
    </citation>
    <scope>NUCLEOTIDE SEQUENCE [LARGE SCALE GENOMIC DNA]</scope>
    <source>
        <strain>NBRC 101917 / NGR234</strain>
    </source>
</reference>
<reference key="2">
    <citation type="journal article" date="2009" name="Appl. Environ. Microbiol.">
        <title>Rhizobium sp. strain NGR234 possesses a remarkable number of secretion systems.</title>
        <authorList>
            <person name="Schmeisser C."/>
            <person name="Liesegang H."/>
            <person name="Krysciak D."/>
            <person name="Bakkou N."/>
            <person name="Le Quere A."/>
            <person name="Wollherr A."/>
            <person name="Heinemeyer I."/>
            <person name="Morgenstern B."/>
            <person name="Pommerening-Roeser A."/>
            <person name="Flores M."/>
            <person name="Palacios R."/>
            <person name="Brenner S."/>
            <person name="Gottschalk G."/>
            <person name="Schmitz R.A."/>
            <person name="Broughton W.J."/>
            <person name="Perret X."/>
            <person name="Strittmatter A.W."/>
            <person name="Streit W.R."/>
        </authorList>
    </citation>
    <scope>NUCLEOTIDE SEQUENCE [LARGE SCALE GENOMIC DNA]</scope>
    <source>
        <strain>NBRC 101917 / NGR234</strain>
    </source>
</reference>
<organism>
    <name type="scientific">Sinorhizobium fredii (strain NBRC 101917 / NGR234)</name>
    <dbReference type="NCBI Taxonomy" id="394"/>
    <lineage>
        <taxon>Bacteria</taxon>
        <taxon>Pseudomonadati</taxon>
        <taxon>Pseudomonadota</taxon>
        <taxon>Alphaproteobacteria</taxon>
        <taxon>Hyphomicrobiales</taxon>
        <taxon>Rhizobiaceae</taxon>
        <taxon>Sinorhizobium/Ensifer group</taxon>
        <taxon>Sinorhizobium</taxon>
    </lineage>
</organism>
<sequence length="253" mass="25995">MLLKGKTAVISGAASKRGIGRATAELFASHGARVAILDINADEAKAAAGDLPPVEHGAHIGLRCDVADRASCTSASDEVLSAFGVANILINNAGITQPVKTLDISDADWQRIVAVNMTGVLNLSQVFIPNMRQNGGGSIACMSSVSAQRGGGIFGGPHYSAAKAGVLGLAKAMAREFGPDSIRVNCVTPGLIQTDITGDKLSAEMRADIVKGIPLSRLGDARDVANIYLFLASDLSAYVTGAVIDVNGGMLIH</sequence>
<protein>
    <recommendedName>
        <fullName>Uncharacterized short-chain type dehydrogenase/reductase y4mP</fullName>
        <ecNumber>1.-.-.-</ecNumber>
    </recommendedName>
</protein>
<feature type="chain" id="PRO_0000054888" description="Uncharacterized short-chain type dehydrogenase/reductase y4mP">
    <location>
        <begin position="1"/>
        <end position="253"/>
    </location>
</feature>
<feature type="active site" description="Proton acceptor" evidence="2">
    <location>
        <position position="159"/>
    </location>
</feature>
<feature type="binding site" evidence="1">
    <location>
        <begin position="10"/>
        <end position="35"/>
    </location>
    <ligand>
        <name>NADP(+)</name>
        <dbReference type="ChEBI" id="CHEBI:58349"/>
    </ligand>
</feature>
<feature type="binding site" evidence="1">
    <location>
        <position position="144"/>
    </location>
    <ligand>
        <name>substrate</name>
    </ligand>
</feature>
<gene>
    <name type="ordered locus">NGR_a02430</name>
    <name type="ORF">y4mP</name>
</gene>
<evidence type="ECO:0000250" key="1"/>
<evidence type="ECO:0000255" key="2">
    <source>
        <dbReference type="PROSITE-ProRule" id="PRU10001"/>
    </source>
</evidence>
<evidence type="ECO:0000305" key="3"/>
<comment type="similarity">
    <text evidence="3">Belongs to the short-chain dehydrogenases/reductases (SDR) family.</text>
</comment>